<proteinExistence type="inferred from homology"/>
<keyword id="KW-0067">ATP-binding</keyword>
<keyword id="KW-0963">Cytoplasm</keyword>
<keyword id="KW-0418">Kinase</keyword>
<keyword id="KW-0479">Metal-binding</keyword>
<keyword id="KW-0545">Nucleotide biosynthesis</keyword>
<keyword id="KW-0547">Nucleotide-binding</keyword>
<keyword id="KW-0808">Transferase</keyword>
<keyword id="KW-0862">Zinc</keyword>
<sequence>MVNSIFYIIMGPPGSGKGTQSQRLANHLGLPHISSGDLFRSAIKSATPLGSKAAEYINKGLLVPDNLVWEIVQETLNKPGCKSGCIIDGFPRTLDQAVLLNDFLVKSNAADYRVIQLDVSAEEIISRIHSRFICPACNYVYNQSQGFKECPTCHVALIRRSDDSLEVIHQRLESYEKATVPVINYYEDLGKLIHIPSETSPDEVFQSILACTEA</sequence>
<gene>
    <name evidence="1" type="primary">adk</name>
    <name type="ordered locus">CCA_00535</name>
</gene>
<organism>
    <name type="scientific">Chlamydia caviae (strain ATCC VR-813 / DSM 19441 / 03DC25 / GPIC)</name>
    <name type="common">Chlamydophila caviae</name>
    <dbReference type="NCBI Taxonomy" id="227941"/>
    <lineage>
        <taxon>Bacteria</taxon>
        <taxon>Pseudomonadati</taxon>
        <taxon>Chlamydiota</taxon>
        <taxon>Chlamydiia</taxon>
        <taxon>Chlamydiales</taxon>
        <taxon>Chlamydiaceae</taxon>
        <taxon>Chlamydia/Chlamydophila group</taxon>
        <taxon>Chlamydia</taxon>
    </lineage>
</organism>
<evidence type="ECO:0000255" key="1">
    <source>
        <dbReference type="HAMAP-Rule" id="MF_00235"/>
    </source>
</evidence>
<feature type="chain" id="PRO_0000158751" description="Adenylate kinase">
    <location>
        <begin position="1"/>
        <end position="214"/>
    </location>
</feature>
<feature type="region of interest" description="NMP" evidence="1">
    <location>
        <begin position="34"/>
        <end position="63"/>
    </location>
</feature>
<feature type="region of interest" description="LID" evidence="1">
    <location>
        <begin position="130"/>
        <end position="163"/>
    </location>
</feature>
<feature type="binding site" evidence="1">
    <location>
        <begin position="14"/>
        <end position="19"/>
    </location>
    <ligand>
        <name>ATP</name>
        <dbReference type="ChEBI" id="CHEBI:30616"/>
    </ligand>
</feature>
<feature type="binding site" evidence="1">
    <location>
        <position position="35"/>
    </location>
    <ligand>
        <name>AMP</name>
        <dbReference type="ChEBI" id="CHEBI:456215"/>
    </ligand>
</feature>
<feature type="binding site" evidence="1">
    <location>
        <position position="40"/>
    </location>
    <ligand>
        <name>AMP</name>
        <dbReference type="ChEBI" id="CHEBI:456215"/>
    </ligand>
</feature>
<feature type="binding site" evidence="1">
    <location>
        <begin position="61"/>
        <end position="63"/>
    </location>
    <ligand>
        <name>AMP</name>
        <dbReference type="ChEBI" id="CHEBI:456215"/>
    </ligand>
</feature>
<feature type="binding site" evidence="1">
    <location>
        <begin position="89"/>
        <end position="92"/>
    </location>
    <ligand>
        <name>AMP</name>
        <dbReference type="ChEBI" id="CHEBI:456215"/>
    </ligand>
</feature>
<feature type="binding site" evidence="1">
    <location>
        <position position="96"/>
    </location>
    <ligand>
        <name>AMP</name>
        <dbReference type="ChEBI" id="CHEBI:456215"/>
    </ligand>
</feature>
<feature type="binding site" evidence="1">
    <location>
        <position position="131"/>
    </location>
    <ligand>
        <name>ATP</name>
        <dbReference type="ChEBI" id="CHEBI:30616"/>
    </ligand>
</feature>
<feature type="binding site" evidence="1">
    <location>
        <position position="134"/>
    </location>
    <ligand>
        <name>Zn(2+)</name>
        <dbReference type="ChEBI" id="CHEBI:29105"/>
        <note>structural</note>
    </ligand>
</feature>
<feature type="binding site" evidence="1">
    <location>
        <position position="137"/>
    </location>
    <ligand>
        <name>Zn(2+)</name>
        <dbReference type="ChEBI" id="CHEBI:29105"/>
        <note>structural</note>
    </ligand>
</feature>
<feature type="binding site" evidence="1">
    <location>
        <begin position="140"/>
        <end position="141"/>
    </location>
    <ligand>
        <name>ATP</name>
        <dbReference type="ChEBI" id="CHEBI:30616"/>
    </ligand>
</feature>
<feature type="binding site" evidence="1">
    <location>
        <position position="150"/>
    </location>
    <ligand>
        <name>Zn(2+)</name>
        <dbReference type="ChEBI" id="CHEBI:29105"/>
        <note>structural</note>
    </ligand>
</feature>
<feature type="binding site" evidence="1">
    <location>
        <position position="153"/>
    </location>
    <ligand>
        <name>Zn(2+)</name>
        <dbReference type="ChEBI" id="CHEBI:29105"/>
        <note>structural</note>
    </ligand>
</feature>
<feature type="binding site" evidence="1">
    <location>
        <position position="160"/>
    </location>
    <ligand>
        <name>AMP</name>
        <dbReference type="ChEBI" id="CHEBI:456215"/>
    </ligand>
</feature>
<feature type="binding site" evidence="1">
    <location>
        <position position="171"/>
    </location>
    <ligand>
        <name>AMP</name>
        <dbReference type="ChEBI" id="CHEBI:456215"/>
    </ligand>
</feature>
<feature type="binding site" evidence="1">
    <location>
        <position position="199"/>
    </location>
    <ligand>
        <name>ATP</name>
        <dbReference type="ChEBI" id="CHEBI:30616"/>
    </ligand>
</feature>
<protein>
    <recommendedName>
        <fullName evidence="1">Adenylate kinase</fullName>
        <shortName evidence="1">AK</shortName>
        <ecNumber evidence="1">2.7.4.3</ecNumber>
    </recommendedName>
    <alternativeName>
        <fullName evidence="1">ATP-AMP transphosphorylase</fullName>
    </alternativeName>
    <alternativeName>
        <fullName evidence="1">ATP:AMP phosphotransferase</fullName>
    </alternativeName>
    <alternativeName>
        <fullName evidence="1">Adenylate monophosphate kinase</fullName>
    </alternativeName>
</protein>
<accession>Q822Z1</accession>
<reference key="1">
    <citation type="journal article" date="2003" name="Nucleic Acids Res.">
        <title>Genome sequence of Chlamydophila caviae (Chlamydia psittaci GPIC): examining the role of niche-specific genes in the evolution of the Chlamydiaceae.</title>
        <authorList>
            <person name="Read T.D."/>
            <person name="Myers G.S.A."/>
            <person name="Brunham R.C."/>
            <person name="Nelson W.C."/>
            <person name="Paulsen I.T."/>
            <person name="Heidelberg J.F."/>
            <person name="Holtzapple E.K."/>
            <person name="Khouri H.M."/>
            <person name="Federova N.B."/>
            <person name="Carty H.A."/>
            <person name="Umayam L.A."/>
            <person name="Haft D.H."/>
            <person name="Peterson J.D."/>
            <person name="Beanan M.J."/>
            <person name="White O."/>
            <person name="Salzberg S.L."/>
            <person name="Hsia R.-C."/>
            <person name="McClarty G."/>
            <person name="Rank R.G."/>
            <person name="Bavoil P.M."/>
            <person name="Fraser C.M."/>
        </authorList>
    </citation>
    <scope>NUCLEOTIDE SEQUENCE [LARGE SCALE GENOMIC DNA]</scope>
    <source>
        <strain>ATCC VR-813 / DSM 19441 / 03DC25 / GPIC</strain>
    </source>
</reference>
<dbReference type="EC" id="2.7.4.3" evidence="1"/>
<dbReference type="EMBL" id="AE015925">
    <property type="protein sequence ID" value="AAP05278.1"/>
    <property type="molecule type" value="Genomic_DNA"/>
</dbReference>
<dbReference type="RefSeq" id="WP_011006493.1">
    <property type="nucleotide sequence ID" value="NC_003361.3"/>
</dbReference>
<dbReference type="SMR" id="Q822Z1"/>
<dbReference type="STRING" id="227941.CCA_00535"/>
<dbReference type="KEGG" id="cca:CCA_00535"/>
<dbReference type="eggNOG" id="COG0563">
    <property type="taxonomic scope" value="Bacteria"/>
</dbReference>
<dbReference type="HOGENOM" id="CLU_032354_1_2_0"/>
<dbReference type="OrthoDB" id="9805030at2"/>
<dbReference type="UniPathway" id="UPA00588">
    <property type="reaction ID" value="UER00649"/>
</dbReference>
<dbReference type="Proteomes" id="UP000002193">
    <property type="component" value="Chromosome"/>
</dbReference>
<dbReference type="GO" id="GO:0005737">
    <property type="term" value="C:cytoplasm"/>
    <property type="evidence" value="ECO:0007669"/>
    <property type="project" value="UniProtKB-SubCell"/>
</dbReference>
<dbReference type="GO" id="GO:0004017">
    <property type="term" value="F:adenylate kinase activity"/>
    <property type="evidence" value="ECO:0007669"/>
    <property type="project" value="UniProtKB-UniRule"/>
</dbReference>
<dbReference type="GO" id="GO:0005524">
    <property type="term" value="F:ATP binding"/>
    <property type="evidence" value="ECO:0007669"/>
    <property type="project" value="UniProtKB-UniRule"/>
</dbReference>
<dbReference type="GO" id="GO:0008270">
    <property type="term" value="F:zinc ion binding"/>
    <property type="evidence" value="ECO:0007669"/>
    <property type="project" value="UniProtKB-UniRule"/>
</dbReference>
<dbReference type="GO" id="GO:0044209">
    <property type="term" value="P:AMP salvage"/>
    <property type="evidence" value="ECO:0007669"/>
    <property type="project" value="UniProtKB-UniRule"/>
</dbReference>
<dbReference type="CDD" id="cd01428">
    <property type="entry name" value="ADK"/>
    <property type="match status" value="1"/>
</dbReference>
<dbReference type="Gene3D" id="3.40.50.300">
    <property type="entry name" value="P-loop containing nucleotide triphosphate hydrolases"/>
    <property type="match status" value="1"/>
</dbReference>
<dbReference type="HAMAP" id="MF_00235">
    <property type="entry name" value="Adenylate_kinase_Adk"/>
    <property type="match status" value="1"/>
</dbReference>
<dbReference type="InterPro" id="IPR006259">
    <property type="entry name" value="Adenyl_kin_sub"/>
</dbReference>
<dbReference type="InterPro" id="IPR000850">
    <property type="entry name" value="Adenylat/UMP-CMP_kin"/>
</dbReference>
<dbReference type="InterPro" id="IPR033690">
    <property type="entry name" value="Adenylat_kinase_CS"/>
</dbReference>
<dbReference type="InterPro" id="IPR027417">
    <property type="entry name" value="P-loop_NTPase"/>
</dbReference>
<dbReference type="NCBIfam" id="TIGR01351">
    <property type="entry name" value="adk"/>
    <property type="match status" value="1"/>
</dbReference>
<dbReference type="NCBIfam" id="NF001381">
    <property type="entry name" value="PRK00279.1-3"/>
    <property type="match status" value="1"/>
</dbReference>
<dbReference type="NCBIfam" id="NF001385">
    <property type="entry name" value="PRK00279.2-3"/>
    <property type="match status" value="1"/>
</dbReference>
<dbReference type="PANTHER" id="PTHR23359">
    <property type="entry name" value="NUCLEOTIDE KINASE"/>
    <property type="match status" value="1"/>
</dbReference>
<dbReference type="Pfam" id="PF00406">
    <property type="entry name" value="ADK"/>
    <property type="match status" value="1"/>
</dbReference>
<dbReference type="PRINTS" id="PR00094">
    <property type="entry name" value="ADENYLTKNASE"/>
</dbReference>
<dbReference type="SUPFAM" id="SSF52540">
    <property type="entry name" value="P-loop containing nucleoside triphosphate hydrolases"/>
    <property type="match status" value="1"/>
</dbReference>
<dbReference type="SUPFAM" id="SSF57802">
    <property type="entry name" value="Rubredoxin-like"/>
    <property type="match status" value="1"/>
</dbReference>
<dbReference type="PROSITE" id="PS00113">
    <property type="entry name" value="ADENYLATE_KINASE"/>
    <property type="match status" value="1"/>
</dbReference>
<name>KAD_CHLCV</name>
<comment type="function">
    <text evidence="1">Catalyzes the reversible transfer of the terminal phosphate group between ATP and AMP. Plays an important role in cellular energy homeostasis and in adenine nucleotide metabolism.</text>
</comment>
<comment type="catalytic activity">
    <reaction evidence="1">
        <text>AMP + ATP = 2 ADP</text>
        <dbReference type="Rhea" id="RHEA:12973"/>
        <dbReference type="ChEBI" id="CHEBI:30616"/>
        <dbReference type="ChEBI" id="CHEBI:456215"/>
        <dbReference type="ChEBI" id="CHEBI:456216"/>
        <dbReference type="EC" id="2.7.4.3"/>
    </reaction>
</comment>
<comment type="pathway">
    <text evidence="1">Purine metabolism; AMP biosynthesis via salvage pathway; AMP from ADP: step 1/1.</text>
</comment>
<comment type="subunit">
    <text evidence="1">Monomer.</text>
</comment>
<comment type="subcellular location">
    <subcellularLocation>
        <location evidence="1">Cytoplasm</location>
    </subcellularLocation>
</comment>
<comment type="domain">
    <text evidence="1">Consists of three domains, a large central CORE domain and two small peripheral domains, NMPbind and LID, which undergo movements during catalysis. The LID domain closes over the site of phosphoryl transfer upon ATP binding. Assembling and dissambling the active center during each catalytic cycle provides an effective means to prevent ATP hydrolysis. Some bacteria have evolved a zinc-coordinating structure that stabilizes the LID domain.</text>
</comment>
<comment type="similarity">
    <text evidence="1">Belongs to the adenylate kinase family.</text>
</comment>